<gene>
    <name evidence="1" type="primary">fni</name>
    <name type="ordered locus">PTO0496</name>
</gene>
<comment type="function">
    <text evidence="1">Involved in the biosynthesis of isoprenoids. Catalyzes the 1,3-allylic rearrangement of the homoallylic substrate isopentenyl (IPP) to its allylic isomer, dimethylallyl diphosphate (DMAPP).</text>
</comment>
<comment type="catalytic activity">
    <reaction evidence="1">
        <text>isopentenyl diphosphate = dimethylallyl diphosphate</text>
        <dbReference type="Rhea" id="RHEA:23284"/>
        <dbReference type="ChEBI" id="CHEBI:57623"/>
        <dbReference type="ChEBI" id="CHEBI:128769"/>
        <dbReference type="EC" id="5.3.3.2"/>
    </reaction>
</comment>
<comment type="cofactor">
    <cofactor evidence="1">
        <name>FMN</name>
        <dbReference type="ChEBI" id="CHEBI:58210"/>
    </cofactor>
</comment>
<comment type="cofactor">
    <cofactor evidence="1">
        <name>NADPH</name>
        <dbReference type="ChEBI" id="CHEBI:57783"/>
    </cofactor>
</comment>
<comment type="cofactor">
    <cofactor evidence="1">
        <name>Mg(2+)</name>
        <dbReference type="ChEBI" id="CHEBI:18420"/>
    </cofactor>
</comment>
<comment type="subunit">
    <text evidence="1">Homooctamer. Dimer of tetramers.</text>
</comment>
<comment type="subcellular location">
    <subcellularLocation>
        <location evidence="1">Cytoplasm</location>
    </subcellularLocation>
</comment>
<comment type="similarity">
    <text evidence="1">Belongs to the IPP isomerase type 2 family.</text>
</comment>
<organism>
    <name type="scientific">Picrophilus torridus (strain ATCC 700027 / DSM 9790 / JCM 10055 / NBRC 100828 / KAW 2/3)</name>
    <dbReference type="NCBI Taxonomy" id="1122961"/>
    <lineage>
        <taxon>Archaea</taxon>
        <taxon>Methanobacteriati</taxon>
        <taxon>Thermoplasmatota</taxon>
        <taxon>Thermoplasmata</taxon>
        <taxon>Thermoplasmatales</taxon>
        <taxon>Picrophilaceae</taxon>
        <taxon>Picrophilus</taxon>
    </lineage>
</organism>
<sequence>MIENRKEEHIKIAENENVVSEHNFWDDIRIVHRAIPEVDFNDIDTGVKFLGKQFNYPILISSMTGGTETAKIINKNLAMTAEHFKIGMGVGSMRVAVKNKNTADTFSVINDYKIPAKFANIGAPQLVRQDSDSLSDNDIEYIYNLINADFLIVHFNFLQEMVQPEGDRNSKGVIKRLKDIAGSYNVIAKETGSGFSKEDALSLLDAGVKAIDVGGLGGTSFAAIEYYRAQKANDEIKMHTGKAFWNWGIPSPASIKYCSLGEPVIGSGGLRNGLDLAKAIMFGATLGGFARELLKDANTSFDDVKRQMEMIINDLKITMMLTSSRNIDELKHARYITLEPLRSWLEVYK</sequence>
<reference key="1">
    <citation type="journal article" date="2004" name="Proc. Natl. Acad. Sci. U.S.A.">
        <title>Genome sequence of Picrophilus torridus and its implications for life around pH 0.</title>
        <authorList>
            <person name="Fuetterer O."/>
            <person name="Angelov A."/>
            <person name="Liesegang H."/>
            <person name="Gottschalk G."/>
            <person name="Schleper C."/>
            <person name="Schepers B."/>
            <person name="Dock C."/>
            <person name="Antranikian G."/>
            <person name="Liebl W."/>
        </authorList>
    </citation>
    <scope>NUCLEOTIDE SEQUENCE [LARGE SCALE GENOMIC DNA]</scope>
    <source>
        <strain>ATCC 700027 / DSM 9790 / JCM 10055 / NBRC 100828 / KAW 2/3</strain>
    </source>
</reference>
<name>IDI2_PICTO</name>
<dbReference type="EC" id="5.3.3.2" evidence="1"/>
<dbReference type="EMBL" id="AE017261">
    <property type="protein sequence ID" value="AAT43081.1"/>
    <property type="molecule type" value="Genomic_DNA"/>
</dbReference>
<dbReference type="RefSeq" id="WP_011177297.1">
    <property type="nucleotide sequence ID" value="NC_005877.1"/>
</dbReference>
<dbReference type="SMR" id="Q6L1S1"/>
<dbReference type="FunCoup" id="Q6L1S1">
    <property type="interactions" value="10"/>
</dbReference>
<dbReference type="STRING" id="263820.PTO0496"/>
<dbReference type="PaxDb" id="263820-PTO0496"/>
<dbReference type="GeneID" id="2844616"/>
<dbReference type="KEGG" id="pto:PTO0496"/>
<dbReference type="PATRIC" id="fig|263820.9.peg.522"/>
<dbReference type="eggNOG" id="arCOG00613">
    <property type="taxonomic scope" value="Archaea"/>
</dbReference>
<dbReference type="HOGENOM" id="CLU_065515_1_0_2"/>
<dbReference type="InParanoid" id="Q6L1S1"/>
<dbReference type="OrthoDB" id="371955at2157"/>
<dbReference type="Proteomes" id="UP000000438">
    <property type="component" value="Chromosome"/>
</dbReference>
<dbReference type="GO" id="GO:0005737">
    <property type="term" value="C:cytoplasm"/>
    <property type="evidence" value="ECO:0007669"/>
    <property type="project" value="UniProtKB-SubCell"/>
</dbReference>
<dbReference type="GO" id="GO:0010181">
    <property type="term" value="F:FMN binding"/>
    <property type="evidence" value="ECO:0007669"/>
    <property type="project" value="UniProtKB-UniRule"/>
</dbReference>
<dbReference type="GO" id="GO:0004452">
    <property type="term" value="F:isopentenyl-diphosphate delta-isomerase activity"/>
    <property type="evidence" value="ECO:0007669"/>
    <property type="project" value="UniProtKB-UniRule"/>
</dbReference>
<dbReference type="GO" id="GO:0000287">
    <property type="term" value="F:magnesium ion binding"/>
    <property type="evidence" value="ECO:0007669"/>
    <property type="project" value="UniProtKB-UniRule"/>
</dbReference>
<dbReference type="GO" id="GO:0070402">
    <property type="term" value="F:NADPH binding"/>
    <property type="evidence" value="ECO:0007669"/>
    <property type="project" value="UniProtKB-UniRule"/>
</dbReference>
<dbReference type="GO" id="GO:0016491">
    <property type="term" value="F:oxidoreductase activity"/>
    <property type="evidence" value="ECO:0007669"/>
    <property type="project" value="InterPro"/>
</dbReference>
<dbReference type="GO" id="GO:0008299">
    <property type="term" value="P:isoprenoid biosynthetic process"/>
    <property type="evidence" value="ECO:0007669"/>
    <property type="project" value="UniProtKB-UniRule"/>
</dbReference>
<dbReference type="CDD" id="cd02811">
    <property type="entry name" value="IDI-2_FMN"/>
    <property type="match status" value="1"/>
</dbReference>
<dbReference type="Gene3D" id="3.20.20.70">
    <property type="entry name" value="Aldolase class I"/>
    <property type="match status" value="1"/>
</dbReference>
<dbReference type="HAMAP" id="MF_00354">
    <property type="entry name" value="Idi_2"/>
    <property type="match status" value="1"/>
</dbReference>
<dbReference type="InterPro" id="IPR013785">
    <property type="entry name" value="Aldolase_TIM"/>
</dbReference>
<dbReference type="InterPro" id="IPR000262">
    <property type="entry name" value="FMN-dep_DH"/>
</dbReference>
<dbReference type="InterPro" id="IPR011179">
    <property type="entry name" value="IPdP_isomerase"/>
</dbReference>
<dbReference type="NCBIfam" id="TIGR02151">
    <property type="entry name" value="IPP_isom_2"/>
    <property type="match status" value="1"/>
</dbReference>
<dbReference type="PANTHER" id="PTHR43665">
    <property type="entry name" value="ISOPENTENYL-DIPHOSPHATE DELTA-ISOMERASE"/>
    <property type="match status" value="1"/>
</dbReference>
<dbReference type="PANTHER" id="PTHR43665:SF1">
    <property type="entry name" value="ISOPENTENYL-DIPHOSPHATE DELTA-ISOMERASE"/>
    <property type="match status" value="1"/>
</dbReference>
<dbReference type="Pfam" id="PF01070">
    <property type="entry name" value="FMN_dh"/>
    <property type="match status" value="1"/>
</dbReference>
<dbReference type="PIRSF" id="PIRSF003314">
    <property type="entry name" value="IPP_isomerase"/>
    <property type="match status" value="1"/>
</dbReference>
<dbReference type="SUPFAM" id="SSF51395">
    <property type="entry name" value="FMN-linked oxidoreductases"/>
    <property type="match status" value="1"/>
</dbReference>
<proteinExistence type="inferred from homology"/>
<accession>Q6L1S1</accession>
<keyword id="KW-0963">Cytoplasm</keyword>
<keyword id="KW-0285">Flavoprotein</keyword>
<keyword id="KW-0288">FMN</keyword>
<keyword id="KW-0413">Isomerase</keyword>
<keyword id="KW-0414">Isoprene biosynthesis</keyword>
<keyword id="KW-0460">Magnesium</keyword>
<keyword id="KW-0479">Metal-binding</keyword>
<keyword id="KW-0521">NADP</keyword>
<protein>
    <recommendedName>
        <fullName evidence="1">Isopentenyl-diphosphate delta-isomerase</fullName>
        <shortName evidence="1">IPP isomerase</shortName>
        <ecNumber evidence="1">5.3.3.2</ecNumber>
    </recommendedName>
    <alternativeName>
        <fullName evidence="1">Isopentenyl diphosphate:dimethylallyl diphosphate isomerase</fullName>
    </alternativeName>
    <alternativeName>
        <fullName evidence="1">Isopentenyl pyrophosphate isomerase</fullName>
    </alternativeName>
    <alternativeName>
        <fullName evidence="1">Type 2 isopentenyl diphosphate isomerase</fullName>
        <shortName evidence="1">IDI-2</shortName>
    </alternativeName>
</protein>
<feature type="chain" id="PRO_0000134448" description="Isopentenyl-diphosphate delta-isomerase">
    <location>
        <begin position="1"/>
        <end position="349"/>
    </location>
</feature>
<feature type="binding site" evidence="1">
    <location>
        <begin position="5"/>
        <end position="6"/>
    </location>
    <ligand>
        <name>substrate</name>
    </ligand>
</feature>
<feature type="binding site" evidence="1">
    <location>
        <position position="61"/>
    </location>
    <ligand>
        <name>FMN</name>
        <dbReference type="ChEBI" id="CHEBI:58210"/>
    </ligand>
</feature>
<feature type="binding site" evidence="1">
    <location>
        <begin position="62"/>
        <end position="64"/>
    </location>
    <ligand>
        <name>FMN</name>
        <dbReference type="ChEBI" id="CHEBI:58210"/>
    </ligand>
</feature>
<feature type="binding site" evidence="1">
    <location>
        <begin position="92"/>
        <end position="94"/>
    </location>
    <ligand>
        <name>substrate</name>
    </ligand>
</feature>
<feature type="binding site" evidence="1">
    <location>
        <position position="92"/>
    </location>
    <ligand>
        <name>FMN</name>
        <dbReference type="ChEBI" id="CHEBI:58210"/>
    </ligand>
</feature>
<feature type="binding site" evidence="1">
    <location>
        <position position="120"/>
    </location>
    <ligand>
        <name>FMN</name>
        <dbReference type="ChEBI" id="CHEBI:58210"/>
    </ligand>
</feature>
<feature type="binding site" evidence="1">
    <location>
        <position position="159"/>
    </location>
    <ligand>
        <name>substrate</name>
    </ligand>
</feature>
<feature type="binding site" evidence="1">
    <location>
        <position position="160"/>
    </location>
    <ligand>
        <name>Mg(2+)</name>
        <dbReference type="ChEBI" id="CHEBI:18420"/>
    </ligand>
</feature>
<feature type="binding site" evidence="1">
    <location>
        <position position="189"/>
    </location>
    <ligand>
        <name>FMN</name>
        <dbReference type="ChEBI" id="CHEBI:58210"/>
    </ligand>
</feature>
<feature type="binding site" evidence="1">
    <location>
        <position position="219"/>
    </location>
    <ligand>
        <name>FMN</name>
        <dbReference type="ChEBI" id="CHEBI:58210"/>
    </ligand>
</feature>
<feature type="binding site" evidence="1">
    <location>
        <begin position="269"/>
        <end position="271"/>
    </location>
    <ligand>
        <name>FMN</name>
        <dbReference type="ChEBI" id="CHEBI:58210"/>
    </ligand>
</feature>
<feature type="binding site" evidence="1">
    <location>
        <begin position="290"/>
        <end position="291"/>
    </location>
    <ligand>
        <name>FMN</name>
        <dbReference type="ChEBI" id="CHEBI:58210"/>
    </ligand>
</feature>
<evidence type="ECO:0000255" key="1">
    <source>
        <dbReference type="HAMAP-Rule" id="MF_00354"/>
    </source>
</evidence>